<sequence>MKMFFTVLVTLFVCSMIIGICEGREIPVKCKGSKQCLQSCKEAGMTYGKCMNGKCNCTPKG</sequence>
<reference key="1">
    <citation type="journal article" date="2015" name="J. Biol. Chem.">
        <title>Variability of potassium channel blockers in Mesobuthus eupeus scorpion venom with focus on Kv1.1: an integrated transcriptomic and proteomic study.</title>
        <authorList>
            <person name="Kuzmenkov A.I."/>
            <person name="Vassilevski A.A."/>
            <person name="Kudryashova K.S."/>
            <person name="Nekrasova O.V."/>
            <person name="Peigneur S."/>
            <person name="Tytgat J."/>
            <person name="Feofanov A.V."/>
            <person name="Kirpichnikov M.P."/>
            <person name="Grishin E.V."/>
        </authorList>
    </citation>
    <scope>NUCLEOTIDE SEQUENCE [MRNA]</scope>
    <scope>PROTEIN SEQUENCE OF 24-60</scope>
    <scope>MASS SPECTROMETRY</scope>
    <scope>SUBCELLULAR LOCATION</scope>
    <scope>AMIDATION AT LYS-60</scope>
    <source>
        <tissue>Venom</tissue>
        <tissue>Venom gland</tissue>
    </source>
</reference>
<comment type="function">
    <text evidence="2">Inhibits voltage-gated potassium channel rKv1.1/KCNA1 at nanomolar ranges (IC(50)=90 +-2 nM, reduction of current by 30% at 50 nM or toxin).</text>
</comment>
<comment type="subcellular location">
    <subcellularLocation>
        <location evidence="2">Secreted</location>
    </subcellularLocation>
</comment>
<comment type="tissue specificity">
    <text evidence="5">Expressed by the venom gland.</text>
</comment>
<comment type="domain">
    <text evidence="4">Has the structural arrangement of an alpha-helix connected to antiparallel beta-sheets by disulfide bonds (CS-alpha/beta).</text>
</comment>
<comment type="mass spectrometry"/>
<comment type="similarity">
    <text evidence="3">Belongs to the short scorpion toxin superfamily. Potassium channel inhibitor family. Alpha-KTx 03 subfamily.</text>
</comment>
<name>KAX3I_MESEU</name>
<organism>
    <name type="scientific">Mesobuthus eupeus</name>
    <name type="common">Lesser Asian scorpion</name>
    <name type="synonym">Buthus eupeus</name>
    <dbReference type="NCBI Taxonomy" id="34648"/>
    <lineage>
        <taxon>Eukaryota</taxon>
        <taxon>Metazoa</taxon>
        <taxon>Ecdysozoa</taxon>
        <taxon>Arthropoda</taxon>
        <taxon>Chelicerata</taxon>
        <taxon>Arachnida</taxon>
        <taxon>Scorpiones</taxon>
        <taxon>Buthida</taxon>
        <taxon>Buthoidea</taxon>
        <taxon>Buthidae</taxon>
        <taxon>Mesobuthus</taxon>
    </lineage>
</organism>
<accession>C0HJQ4</accession>
<accession>A0A088DB20</accession>
<protein>
    <recommendedName>
        <fullName evidence="4">Potassium channel toxin alpha-KTx 3.18</fullName>
    </recommendedName>
    <alternativeName>
        <fullName evidence="3">Toxin MeKTx13-2</fullName>
    </alternativeName>
</protein>
<keyword id="KW-0027">Amidation</keyword>
<keyword id="KW-0903">Direct protein sequencing</keyword>
<keyword id="KW-1015">Disulfide bond</keyword>
<keyword id="KW-0872">Ion channel impairing toxin</keyword>
<keyword id="KW-0632">Potassium channel impairing toxin</keyword>
<keyword id="KW-0964">Secreted</keyword>
<keyword id="KW-0732">Signal</keyword>
<keyword id="KW-0800">Toxin</keyword>
<keyword id="KW-1220">Voltage-gated potassium channel impairing toxin</keyword>
<dbReference type="EMBL" id="KF612526">
    <property type="protein sequence ID" value="AIL48784.1"/>
    <property type="molecule type" value="mRNA"/>
</dbReference>
<dbReference type="SMR" id="C0HJQ4"/>
<dbReference type="GO" id="GO:0005576">
    <property type="term" value="C:extracellular region"/>
    <property type="evidence" value="ECO:0007669"/>
    <property type="project" value="UniProtKB-SubCell"/>
</dbReference>
<dbReference type="GO" id="GO:0008200">
    <property type="term" value="F:ion channel inhibitor activity"/>
    <property type="evidence" value="ECO:0007669"/>
    <property type="project" value="InterPro"/>
</dbReference>
<dbReference type="GO" id="GO:0015459">
    <property type="term" value="F:potassium channel regulator activity"/>
    <property type="evidence" value="ECO:0007669"/>
    <property type="project" value="UniProtKB-KW"/>
</dbReference>
<dbReference type="GO" id="GO:0090729">
    <property type="term" value="F:toxin activity"/>
    <property type="evidence" value="ECO:0007669"/>
    <property type="project" value="UniProtKB-KW"/>
</dbReference>
<dbReference type="Gene3D" id="3.30.30.10">
    <property type="entry name" value="Knottin, scorpion toxin-like"/>
    <property type="match status" value="1"/>
</dbReference>
<dbReference type="InterPro" id="IPR036574">
    <property type="entry name" value="Scorpion_toxin-like_sf"/>
</dbReference>
<dbReference type="InterPro" id="IPR001947">
    <property type="entry name" value="Scorpion_toxinS_K_inh"/>
</dbReference>
<dbReference type="Pfam" id="PF00451">
    <property type="entry name" value="Toxin_2"/>
    <property type="match status" value="1"/>
</dbReference>
<dbReference type="PRINTS" id="PR00286">
    <property type="entry name" value="CHARYBDTOXIN"/>
</dbReference>
<dbReference type="SUPFAM" id="SSF57095">
    <property type="entry name" value="Scorpion toxin-like"/>
    <property type="match status" value="1"/>
</dbReference>
<dbReference type="PROSITE" id="PS01138">
    <property type="entry name" value="SCORP_SHORT_TOXIN"/>
    <property type="match status" value="1"/>
</dbReference>
<feature type="signal peptide" evidence="2">
    <location>
        <begin position="1"/>
        <end position="23"/>
    </location>
</feature>
<feature type="chain" id="PRO_0000433141" description="Potassium channel toxin alpha-KTx 3.18" evidence="2">
    <location>
        <begin position="24"/>
        <end position="60"/>
    </location>
</feature>
<feature type="modified residue" description="Lysine amide" evidence="2">
    <location>
        <position position="60"/>
    </location>
</feature>
<feature type="disulfide bond" evidence="1">
    <location>
        <begin position="30"/>
        <end position="50"/>
    </location>
</feature>
<feature type="disulfide bond" evidence="1">
    <location>
        <begin position="36"/>
        <end position="55"/>
    </location>
</feature>
<feature type="disulfide bond" evidence="1">
    <location>
        <begin position="40"/>
        <end position="57"/>
    </location>
</feature>
<evidence type="ECO:0000250" key="1">
    <source>
        <dbReference type="UniProtKB" id="P55896"/>
    </source>
</evidence>
<evidence type="ECO:0000269" key="2">
    <source>
    </source>
</evidence>
<evidence type="ECO:0000303" key="3">
    <source>
    </source>
</evidence>
<evidence type="ECO:0000305" key="4"/>
<evidence type="ECO:0000305" key="5">
    <source>
    </source>
</evidence>
<proteinExistence type="evidence at protein level"/>